<sequence length="81" mass="9245">MSFNPELATKTLEAEGLRCPEPVMMVRKTIRTMQDGEVLLVKADDPSTTRDIPSFCRFMDHQLIAAQTDELPYQYLIKKGL</sequence>
<keyword id="KW-0963">Cytoplasm</keyword>
<proteinExistence type="inferred from homology"/>
<name>TUSA_VIBVU</name>
<reference key="1">
    <citation type="submission" date="2002-12" db="EMBL/GenBank/DDBJ databases">
        <title>Complete genome sequence of Vibrio vulnificus CMCP6.</title>
        <authorList>
            <person name="Rhee J.H."/>
            <person name="Kim S.Y."/>
            <person name="Chung S.S."/>
            <person name="Kim J.J."/>
            <person name="Moon Y.H."/>
            <person name="Jeong H."/>
            <person name="Choy H.E."/>
        </authorList>
    </citation>
    <scope>NUCLEOTIDE SEQUENCE [LARGE SCALE GENOMIC DNA]</scope>
    <source>
        <strain>CMCP6</strain>
    </source>
</reference>
<organism>
    <name type="scientific">Vibrio vulnificus (strain CMCP6)</name>
    <dbReference type="NCBI Taxonomy" id="216895"/>
    <lineage>
        <taxon>Bacteria</taxon>
        <taxon>Pseudomonadati</taxon>
        <taxon>Pseudomonadota</taxon>
        <taxon>Gammaproteobacteria</taxon>
        <taxon>Vibrionales</taxon>
        <taxon>Vibrionaceae</taxon>
        <taxon>Vibrio</taxon>
    </lineage>
</organism>
<feature type="chain" id="PRO_0000159058" description="Sulfur carrier protein TusA">
    <location>
        <begin position="1"/>
        <end position="81"/>
    </location>
</feature>
<feature type="active site" description="Cysteine persulfide intermediate" evidence="1">
    <location>
        <position position="19"/>
    </location>
</feature>
<gene>
    <name evidence="1" type="primary">tusA</name>
    <name type="ordered locus">VV1_0986</name>
</gene>
<protein>
    <recommendedName>
        <fullName evidence="1">Sulfur carrier protein TusA</fullName>
    </recommendedName>
</protein>
<accession>Q8DDK1</accession>
<dbReference type="EMBL" id="AE016795">
    <property type="protein sequence ID" value="AAO09476.1"/>
    <property type="molecule type" value="Genomic_DNA"/>
</dbReference>
<dbReference type="RefSeq" id="WP_011079023.1">
    <property type="nucleotide sequence ID" value="NC_004459.3"/>
</dbReference>
<dbReference type="SMR" id="Q8DDK1"/>
<dbReference type="GeneID" id="93895277"/>
<dbReference type="KEGG" id="vvu:VV1_0986"/>
<dbReference type="HOGENOM" id="CLU_165255_5_1_6"/>
<dbReference type="Proteomes" id="UP000002275">
    <property type="component" value="Chromosome 1"/>
</dbReference>
<dbReference type="GO" id="GO:0005737">
    <property type="term" value="C:cytoplasm"/>
    <property type="evidence" value="ECO:0007669"/>
    <property type="project" value="UniProtKB-SubCell"/>
</dbReference>
<dbReference type="GO" id="GO:0097163">
    <property type="term" value="F:sulfur carrier activity"/>
    <property type="evidence" value="ECO:0007669"/>
    <property type="project" value="UniProtKB-UniRule"/>
</dbReference>
<dbReference type="GO" id="GO:0002143">
    <property type="term" value="P:tRNA wobble position uridine thiolation"/>
    <property type="evidence" value="ECO:0007669"/>
    <property type="project" value="InterPro"/>
</dbReference>
<dbReference type="CDD" id="cd03423">
    <property type="entry name" value="SirA"/>
    <property type="match status" value="1"/>
</dbReference>
<dbReference type="Gene3D" id="3.30.110.40">
    <property type="entry name" value="TusA-like domain"/>
    <property type="match status" value="1"/>
</dbReference>
<dbReference type="HAMAP" id="MF_00413">
    <property type="entry name" value="Thiourid_synth_A"/>
    <property type="match status" value="1"/>
</dbReference>
<dbReference type="InterPro" id="IPR022931">
    <property type="entry name" value="Sulphur_carrier_TusA"/>
</dbReference>
<dbReference type="InterPro" id="IPR001455">
    <property type="entry name" value="TusA-like"/>
</dbReference>
<dbReference type="InterPro" id="IPR036868">
    <property type="entry name" value="TusA-like_sf"/>
</dbReference>
<dbReference type="NCBIfam" id="NF001423">
    <property type="entry name" value="PRK00299.1"/>
    <property type="match status" value="1"/>
</dbReference>
<dbReference type="PANTHER" id="PTHR33279:SF2">
    <property type="entry name" value="SULFUR CARRIER PROTEIN TUSA"/>
    <property type="match status" value="1"/>
</dbReference>
<dbReference type="PANTHER" id="PTHR33279">
    <property type="entry name" value="SULFUR CARRIER PROTEIN YEDF-RELATED"/>
    <property type="match status" value="1"/>
</dbReference>
<dbReference type="Pfam" id="PF01206">
    <property type="entry name" value="TusA"/>
    <property type="match status" value="1"/>
</dbReference>
<dbReference type="SUPFAM" id="SSF64307">
    <property type="entry name" value="SirA-like"/>
    <property type="match status" value="1"/>
</dbReference>
<dbReference type="PROSITE" id="PS01148">
    <property type="entry name" value="UPF0033"/>
    <property type="match status" value="1"/>
</dbReference>
<evidence type="ECO:0000255" key="1">
    <source>
        <dbReference type="HAMAP-Rule" id="MF_00413"/>
    </source>
</evidence>
<comment type="function">
    <text evidence="1">Sulfur carrier protein which probably makes part of a sulfur-relay system.</text>
</comment>
<comment type="subcellular location">
    <subcellularLocation>
        <location evidence="1">Cytoplasm</location>
    </subcellularLocation>
</comment>
<comment type="similarity">
    <text evidence="1">Belongs to the sulfur carrier protein TusA family.</text>
</comment>